<organism>
    <name type="scientific">Staphylococcus aureus (strain N315)</name>
    <dbReference type="NCBI Taxonomy" id="158879"/>
    <lineage>
        <taxon>Bacteria</taxon>
        <taxon>Bacillati</taxon>
        <taxon>Bacillota</taxon>
        <taxon>Bacilli</taxon>
        <taxon>Bacillales</taxon>
        <taxon>Staphylococcaceae</taxon>
        <taxon>Staphylococcus</taxon>
    </lineage>
</organism>
<evidence type="ECO:0000255" key="1">
    <source>
        <dbReference type="HAMAP-Rule" id="MF_00109"/>
    </source>
</evidence>
<sequence>MNHDKSPIILIGFMGTGKSTIGKYVADEQNLSFIDIDSYIEEKYKLTIPEIFSKHGEQYFRNLEFTCLQECINTADIIATGGGIIESEEAFNFLKNQKNIIWLDCNIDIIYSRINDDPHRPNANNKTIKQLNDLYCSRILRYNEIAFKKFDSHLLSISEIYYELLNLIKASDQY</sequence>
<keyword id="KW-0028">Amino-acid biosynthesis</keyword>
<keyword id="KW-0057">Aromatic amino acid biosynthesis</keyword>
<keyword id="KW-0067">ATP-binding</keyword>
<keyword id="KW-0963">Cytoplasm</keyword>
<keyword id="KW-0418">Kinase</keyword>
<keyword id="KW-0460">Magnesium</keyword>
<keyword id="KW-0479">Metal-binding</keyword>
<keyword id="KW-0547">Nucleotide-binding</keyword>
<keyword id="KW-0808">Transferase</keyword>
<feature type="chain" id="PRO_0000192412" description="Shikimate kinase">
    <location>
        <begin position="1"/>
        <end position="174"/>
    </location>
</feature>
<feature type="binding site" evidence="1">
    <location>
        <begin position="15"/>
        <end position="20"/>
    </location>
    <ligand>
        <name>ATP</name>
        <dbReference type="ChEBI" id="CHEBI:30616"/>
    </ligand>
</feature>
<feature type="binding site" evidence="1">
    <location>
        <position position="19"/>
    </location>
    <ligand>
        <name>Mg(2+)</name>
        <dbReference type="ChEBI" id="CHEBI:18420"/>
    </ligand>
</feature>
<feature type="binding site" evidence="1">
    <location>
        <position position="37"/>
    </location>
    <ligand>
        <name>substrate</name>
    </ligand>
</feature>
<feature type="binding site" evidence="1">
    <location>
        <position position="61"/>
    </location>
    <ligand>
        <name>substrate</name>
    </ligand>
</feature>
<feature type="binding site" evidence="1">
    <location>
        <position position="82"/>
    </location>
    <ligand>
        <name>substrate</name>
    </ligand>
</feature>
<feature type="binding site" evidence="1">
    <location>
        <position position="120"/>
    </location>
    <ligand>
        <name>ATP</name>
        <dbReference type="ChEBI" id="CHEBI:30616"/>
    </ligand>
</feature>
<feature type="binding site" evidence="1">
    <location>
        <position position="138"/>
    </location>
    <ligand>
        <name>substrate</name>
    </ligand>
</feature>
<name>AROK_STAAN</name>
<dbReference type="EC" id="2.7.1.71" evidence="1"/>
<dbReference type="EMBL" id="BA000018">
    <property type="protein sequence ID" value="BAB42630.1"/>
    <property type="molecule type" value="Genomic_DNA"/>
</dbReference>
<dbReference type="PIR" id="A89934">
    <property type="entry name" value="A89934"/>
</dbReference>
<dbReference type="RefSeq" id="WP_001015120.1">
    <property type="nucleotide sequence ID" value="NC_002745.2"/>
</dbReference>
<dbReference type="SMR" id="P63606"/>
<dbReference type="EnsemblBacteria" id="BAB42630">
    <property type="protein sequence ID" value="BAB42630"/>
    <property type="gene ID" value="BAB42630"/>
</dbReference>
<dbReference type="KEGG" id="sau:SA1368"/>
<dbReference type="HOGENOM" id="CLU_057607_4_3_9"/>
<dbReference type="UniPathway" id="UPA00053">
    <property type="reaction ID" value="UER00088"/>
</dbReference>
<dbReference type="GO" id="GO:0005829">
    <property type="term" value="C:cytosol"/>
    <property type="evidence" value="ECO:0007669"/>
    <property type="project" value="TreeGrafter"/>
</dbReference>
<dbReference type="GO" id="GO:0005524">
    <property type="term" value="F:ATP binding"/>
    <property type="evidence" value="ECO:0007669"/>
    <property type="project" value="UniProtKB-UniRule"/>
</dbReference>
<dbReference type="GO" id="GO:0000287">
    <property type="term" value="F:magnesium ion binding"/>
    <property type="evidence" value="ECO:0007669"/>
    <property type="project" value="UniProtKB-UniRule"/>
</dbReference>
<dbReference type="GO" id="GO:0004765">
    <property type="term" value="F:shikimate kinase activity"/>
    <property type="evidence" value="ECO:0007669"/>
    <property type="project" value="UniProtKB-UniRule"/>
</dbReference>
<dbReference type="GO" id="GO:0008652">
    <property type="term" value="P:amino acid biosynthetic process"/>
    <property type="evidence" value="ECO:0007669"/>
    <property type="project" value="UniProtKB-KW"/>
</dbReference>
<dbReference type="GO" id="GO:0009073">
    <property type="term" value="P:aromatic amino acid family biosynthetic process"/>
    <property type="evidence" value="ECO:0007669"/>
    <property type="project" value="UniProtKB-KW"/>
</dbReference>
<dbReference type="GO" id="GO:0009423">
    <property type="term" value="P:chorismate biosynthetic process"/>
    <property type="evidence" value="ECO:0007669"/>
    <property type="project" value="UniProtKB-UniRule"/>
</dbReference>
<dbReference type="CDD" id="cd00464">
    <property type="entry name" value="SK"/>
    <property type="match status" value="1"/>
</dbReference>
<dbReference type="FunFam" id="3.40.50.300:FF:001734">
    <property type="entry name" value="Shikimate kinase"/>
    <property type="match status" value="1"/>
</dbReference>
<dbReference type="Gene3D" id="3.40.50.300">
    <property type="entry name" value="P-loop containing nucleotide triphosphate hydrolases"/>
    <property type="match status" value="1"/>
</dbReference>
<dbReference type="HAMAP" id="MF_00109">
    <property type="entry name" value="Shikimate_kinase"/>
    <property type="match status" value="1"/>
</dbReference>
<dbReference type="InterPro" id="IPR027417">
    <property type="entry name" value="P-loop_NTPase"/>
</dbReference>
<dbReference type="InterPro" id="IPR031322">
    <property type="entry name" value="Shikimate/glucono_kinase"/>
</dbReference>
<dbReference type="InterPro" id="IPR000623">
    <property type="entry name" value="Shikimate_kinase/TSH1"/>
</dbReference>
<dbReference type="InterPro" id="IPR023000">
    <property type="entry name" value="Shikimate_kinase_CS"/>
</dbReference>
<dbReference type="PANTHER" id="PTHR21087">
    <property type="entry name" value="SHIKIMATE KINASE"/>
    <property type="match status" value="1"/>
</dbReference>
<dbReference type="PANTHER" id="PTHR21087:SF16">
    <property type="entry name" value="SHIKIMATE KINASE 1, CHLOROPLASTIC"/>
    <property type="match status" value="1"/>
</dbReference>
<dbReference type="Pfam" id="PF01202">
    <property type="entry name" value="SKI"/>
    <property type="match status" value="1"/>
</dbReference>
<dbReference type="PRINTS" id="PR01100">
    <property type="entry name" value="SHIKIMTKNASE"/>
</dbReference>
<dbReference type="SUPFAM" id="SSF52540">
    <property type="entry name" value="P-loop containing nucleoside triphosphate hydrolases"/>
    <property type="match status" value="1"/>
</dbReference>
<dbReference type="PROSITE" id="PS01128">
    <property type="entry name" value="SHIKIMATE_KINASE"/>
    <property type="match status" value="1"/>
</dbReference>
<comment type="function">
    <text evidence="1">Catalyzes the specific phosphorylation of the 3-hydroxyl group of shikimic acid using ATP as a cosubstrate.</text>
</comment>
<comment type="catalytic activity">
    <reaction evidence="1">
        <text>shikimate + ATP = 3-phosphoshikimate + ADP + H(+)</text>
        <dbReference type="Rhea" id="RHEA:13121"/>
        <dbReference type="ChEBI" id="CHEBI:15378"/>
        <dbReference type="ChEBI" id="CHEBI:30616"/>
        <dbReference type="ChEBI" id="CHEBI:36208"/>
        <dbReference type="ChEBI" id="CHEBI:145989"/>
        <dbReference type="ChEBI" id="CHEBI:456216"/>
        <dbReference type="EC" id="2.7.1.71"/>
    </reaction>
</comment>
<comment type="cofactor">
    <cofactor evidence="1">
        <name>Mg(2+)</name>
        <dbReference type="ChEBI" id="CHEBI:18420"/>
    </cofactor>
    <text evidence="1">Binds 1 Mg(2+) ion per subunit.</text>
</comment>
<comment type="pathway">
    <text evidence="1">Metabolic intermediate biosynthesis; chorismate biosynthesis; chorismate from D-erythrose 4-phosphate and phosphoenolpyruvate: step 5/7.</text>
</comment>
<comment type="subunit">
    <text evidence="1">Monomer.</text>
</comment>
<comment type="subcellular location">
    <subcellularLocation>
        <location evidence="1">Cytoplasm</location>
    </subcellularLocation>
</comment>
<comment type="similarity">
    <text evidence="1">Belongs to the shikimate kinase family.</text>
</comment>
<reference key="1">
    <citation type="journal article" date="2001" name="Lancet">
        <title>Whole genome sequencing of meticillin-resistant Staphylococcus aureus.</title>
        <authorList>
            <person name="Kuroda M."/>
            <person name="Ohta T."/>
            <person name="Uchiyama I."/>
            <person name="Baba T."/>
            <person name="Yuzawa H."/>
            <person name="Kobayashi I."/>
            <person name="Cui L."/>
            <person name="Oguchi A."/>
            <person name="Aoki K."/>
            <person name="Nagai Y."/>
            <person name="Lian J.-Q."/>
            <person name="Ito T."/>
            <person name="Kanamori M."/>
            <person name="Matsumaru H."/>
            <person name="Maruyama A."/>
            <person name="Murakami H."/>
            <person name="Hosoyama A."/>
            <person name="Mizutani-Ui Y."/>
            <person name="Takahashi N.K."/>
            <person name="Sawano T."/>
            <person name="Inoue R."/>
            <person name="Kaito C."/>
            <person name="Sekimizu K."/>
            <person name="Hirakawa H."/>
            <person name="Kuhara S."/>
            <person name="Goto S."/>
            <person name="Yabuzaki J."/>
            <person name="Kanehisa M."/>
            <person name="Yamashita A."/>
            <person name="Oshima K."/>
            <person name="Furuya K."/>
            <person name="Yoshino C."/>
            <person name="Shiba T."/>
            <person name="Hattori M."/>
            <person name="Ogasawara N."/>
            <person name="Hayashi H."/>
            <person name="Hiramatsu K."/>
        </authorList>
    </citation>
    <scope>NUCLEOTIDE SEQUENCE [LARGE SCALE GENOMIC DNA]</scope>
    <source>
        <strain>N315</strain>
    </source>
</reference>
<proteinExistence type="inferred from homology"/>
<gene>
    <name evidence="1" type="primary">aroK</name>
    <name type="ordered locus">SA1368</name>
</gene>
<protein>
    <recommendedName>
        <fullName evidence="1">Shikimate kinase</fullName>
        <shortName evidence="1">SK</shortName>
        <ecNumber evidence="1">2.7.1.71</ecNumber>
    </recommendedName>
</protein>
<accession>P63606</accession>
<accession>Q99TV6</accession>